<organism>
    <name type="scientific">Staphylococcus aureus (strain MSSA476)</name>
    <dbReference type="NCBI Taxonomy" id="282459"/>
    <lineage>
        <taxon>Bacteria</taxon>
        <taxon>Bacillati</taxon>
        <taxon>Bacillota</taxon>
        <taxon>Bacilli</taxon>
        <taxon>Bacillales</taxon>
        <taxon>Staphylococcaceae</taxon>
        <taxon>Staphylococcus</taxon>
    </lineage>
</organism>
<dbReference type="EC" id="1.2.4.1"/>
<dbReference type="EMBL" id="BX571857">
    <property type="protein sequence ID" value="CAG42802.1"/>
    <property type="molecule type" value="Genomic_DNA"/>
</dbReference>
<dbReference type="RefSeq" id="WP_000035320.1">
    <property type="nucleotide sequence ID" value="NC_002953.3"/>
</dbReference>
<dbReference type="SMR" id="Q6GAC1"/>
<dbReference type="KEGG" id="sas:SAS1028"/>
<dbReference type="HOGENOM" id="CLU_029393_1_0_9"/>
<dbReference type="GO" id="GO:0004739">
    <property type="term" value="F:pyruvate dehydrogenase (acetyl-transferring) activity"/>
    <property type="evidence" value="ECO:0007669"/>
    <property type="project" value="UniProtKB-EC"/>
</dbReference>
<dbReference type="GO" id="GO:0009083">
    <property type="term" value="P:branched-chain amino acid catabolic process"/>
    <property type="evidence" value="ECO:0007669"/>
    <property type="project" value="TreeGrafter"/>
</dbReference>
<dbReference type="CDD" id="cd02000">
    <property type="entry name" value="TPP_E1_PDC_ADC_BCADC"/>
    <property type="match status" value="1"/>
</dbReference>
<dbReference type="FunFam" id="3.40.50.970:FF:000023">
    <property type="entry name" value="Pyruvate dehydrogenase E1 component subunit alpha"/>
    <property type="match status" value="1"/>
</dbReference>
<dbReference type="Gene3D" id="3.40.50.970">
    <property type="match status" value="1"/>
</dbReference>
<dbReference type="InterPro" id="IPR050771">
    <property type="entry name" value="Alpha-ketoacid_DH_E1_comp"/>
</dbReference>
<dbReference type="InterPro" id="IPR001017">
    <property type="entry name" value="DH_E1"/>
</dbReference>
<dbReference type="InterPro" id="IPR017596">
    <property type="entry name" value="PdhA/BkdA"/>
</dbReference>
<dbReference type="InterPro" id="IPR029061">
    <property type="entry name" value="THDP-binding"/>
</dbReference>
<dbReference type="NCBIfam" id="TIGR03181">
    <property type="entry name" value="PDH_E1_alph_x"/>
    <property type="match status" value="1"/>
</dbReference>
<dbReference type="PANTHER" id="PTHR43380">
    <property type="entry name" value="2-OXOISOVALERATE DEHYDROGENASE SUBUNIT ALPHA, MITOCHONDRIAL"/>
    <property type="match status" value="1"/>
</dbReference>
<dbReference type="PANTHER" id="PTHR43380:SF1">
    <property type="entry name" value="2-OXOISOVALERATE DEHYDROGENASE SUBUNIT ALPHA, MITOCHONDRIAL"/>
    <property type="match status" value="1"/>
</dbReference>
<dbReference type="Pfam" id="PF00676">
    <property type="entry name" value="E1_dh"/>
    <property type="match status" value="1"/>
</dbReference>
<dbReference type="SUPFAM" id="SSF52518">
    <property type="entry name" value="Thiamin diphosphate-binding fold (THDP-binding)"/>
    <property type="match status" value="1"/>
</dbReference>
<proteinExistence type="inferred from homology"/>
<protein>
    <recommendedName>
        <fullName>Pyruvate dehydrogenase E1 component subunit alpha</fullName>
        <ecNumber>1.2.4.1</ecNumber>
    </recommendedName>
</protein>
<keyword id="KW-0560">Oxidoreductase</keyword>
<keyword id="KW-0670">Pyruvate</keyword>
<keyword id="KW-0786">Thiamine pyrophosphate</keyword>
<gene>
    <name type="primary">pdhA</name>
    <name type="ordered locus">SAS1028</name>
</gene>
<reference key="1">
    <citation type="journal article" date="2004" name="Proc. Natl. Acad. Sci. U.S.A.">
        <title>Complete genomes of two clinical Staphylococcus aureus strains: evidence for the rapid evolution of virulence and drug resistance.</title>
        <authorList>
            <person name="Holden M.T.G."/>
            <person name="Feil E.J."/>
            <person name="Lindsay J.A."/>
            <person name="Peacock S.J."/>
            <person name="Day N.P.J."/>
            <person name="Enright M.C."/>
            <person name="Foster T.J."/>
            <person name="Moore C.E."/>
            <person name="Hurst L."/>
            <person name="Atkin R."/>
            <person name="Barron A."/>
            <person name="Bason N."/>
            <person name="Bentley S.D."/>
            <person name="Chillingworth C."/>
            <person name="Chillingworth T."/>
            <person name="Churcher C."/>
            <person name="Clark L."/>
            <person name="Corton C."/>
            <person name="Cronin A."/>
            <person name="Doggett J."/>
            <person name="Dowd L."/>
            <person name="Feltwell T."/>
            <person name="Hance Z."/>
            <person name="Harris B."/>
            <person name="Hauser H."/>
            <person name="Holroyd S."/>
            <person name="Jagels K."/>
            <person name="James K.D."/>
            <person name="Lennard N."/>
            <person name="Line A."/>
            <person name="Mayes R."/>
            <person name="Moule S."/>
            <person name="Mungall K."/>
            <person name="Ormond D."/>
            <person name="Quail M.A."/>
            <person name="Rabbinowitsch E."/>
            <person name="Rutherford K.M."/>
            <person name="Sanders M."/>
            <person name="Sharp S."/>
            <person name="Simmonds M."/>
            <person name="Stevens K."/>
            <person name="Whitehead S."/>
            <person name="Barrell B.G."/>
            <person name="Spratt B.G."/>
            <person name="Parkhill J."/>
        </authorList>
    </citation>
    <scope>NUCLEOTIDE SEQUENCE [LARGE SCALE GENOMIC DNA]</scope>
    <source>
        <strain>MSSA476</strain>
    </source>
</reference>
<comment type="function">
    <text evidence="1">The pyruvate dehydrogenase complex catalyzes the overall conversion of pyruvate to acetyl-CoA and CO(2). It contains multiple copies of three enzymatic components: pyruvate dehydrogenase (E1), dihydrolipoamide acetyltransferase (E2) and lipoamide dehydrogenase (E3) (By similarity).</text>
</comment>
<comment type="catalytic activity">
    <reaction>
        <text>N(6)-[(R)-lipoyl]-L-lysyl-[protein] + pyruvate + H(+) = N(6)-[(R)-S(8)-acetyldihydrolipoyl]-L-lysyl-[protein] + CO2</text>
        <dbReference type="Rhea" id="RHEA:19189"/>
        <dbReference type="Rhea" id="RHEA-COMP:10474"/>
        <dbReference type="Rhea" id="RHEA-COMP:10478"/>
        <dbReference type="ChEBI" id="CHEBI:15361"/>
        <dbReference type="ChEBI" id="CHEBI:15378"/>
        <dbReference type="ChEBI" id="CHEBI:16526"/>
        <dbReference type="ChEBI" id="CHEBI:83099"/>
        <dbReference type="ChEBI" id="CHEBI:83111"/>
        <dbReference type="EC" id="1.2.4.1"/>
    </reaction>
</comment>
<comment type="cofactor">
    <cofactor evidence="1">
        <name>thiamine diphosphate</name>
        <dbReference type="ChEBI" id="CHEBI:58937"/>
    </cofactor>
</comment>
<comment type="subunit">
    <text>Heterodimer of an alpha and a beta chain.</text>
</comment>
<evidence type="ECO:0000250" key="1"/>
<sequence length="370" mass="41383">MAPKLQAQFDAVKVLNDTQSKFEMVQILDENGNVVNEDLVPDLTDEQLVELMERMVWTRILDQRSISLNRQGRLGFYAPTAGQEASQLASQYALEKEDYILPGYRDVPQIIWHGLPLTEAFLFSRGHFKGNQFPEGVNALSPQIIIGAQYIQAAGVAFALKKRGKNAVAITYTGDGGSSQGDFYEGINFAAAYKAPAIFVIQNNNYAISTPRSKQTAAETLAQKAIAVGIPGIQVDGMDALAVYQATKEARDRAVAGEGPTLIETMTYRYGPHTMAGDDPTRYRTSDEDAEWEKKDPLVRFRKFLENKGLWNEDKENEVIERAKADIKAAIKEADNTEKQTVTSLMEIMYEDMPQNLAEQYEIYKEKESK</sequence>
<name>ODPA_STAAS</name>
<accession>Q6GAC1</accession>
<feature type="chain" id="PRO_0000162209" description="Pyruvate dehydrogenase E1 component subunit alpha">
    <location>
        <begin position="1"/>
        <end position="370"/>
    </location>
</feature>